<reference key="1">
    <citation type="journal article" date="2006" name="BMC Genomics">
        <title>Complete genome sequence of Shigella flexneri 5b and comparison with Shigella flexneri 2a.</title>
        <authorList>
            <person name="Nie H."/>
            <person name="Yang F."/>
            <person name="Zhang X."/>
            <person name="Yang J."/>
            <person name="Chen L."/>
            <person name="Wang J."/>
            <person name="Xiong Z."/>
            <person name="Peng J."/>
            <person name="Sun L."/>
            <person name="Dong J."/>
            <person name="Xue Y."/>
            <person name="Xu X."/>
            <person name="Chen S."/>
            <person name="Yao Z."/>
            <person name="Shen Y."/>
            <person name="Jin Q."/>
        </authorList>
    </citation>
    <scope>NUCLEOTIDE SEQUENCE [LARGE SCALE GENOMIC DNA]</scope>
    <source>
        <strain>8401</strain>
    </source>
</reference>
<accession>Q0SZ95</accession>
<comment type="function">
    <text evidence="1">Activates expression of the rhaBAD and rhaT operons.</text>
</comment>
<comment type="subunit">
    <text evidence="1">Binds DNA as a dimer.</text>
</comment>
<comment type="subcellular location">
    <subcellularLocation>
        <location evidence="1">Cytoplasm</location>
    </subcellularLocation>
</comment>
<proteinExistence type="inferred from homology"/>
<protein>
    <recommendedName>
        <fullName evidence="1">HTH-type transcriptional activator RhaS</fullName>
    </recommendedName>
    <alternativeName>
        <fullName evidence="1">L-rhamnose operon regulatory protein RhaS</fullName>
    </alternativeName>
</protein>
<name>RHAS_SHIF8</name>
<feature type="chain" id="PRO_1000068709" description="HTH-type transcriptional activator RhaS">
    <location>
        <begin position="1"/>
        <end position="278"/>
    </location>
</feature>
<feature type="domain" description="HTH araC/xylS-type" evidence="1">
    <location>
        <begin position="174"/>
        <end position="272"/>
    </location>
</feature>
<feature type="DNA-binding region" description="H-T-H motif" evidence="1">
    <location>
        <begin position="191"/>
        <end position="212"/>
    </location>
</feature>
<feature type="DNA-binding region" description="H-T-H motif" evidence="1">
    <location>
        <begin position="239"/>
        <end position="262"/>
    </location>
</feature>
<feature type="site" description="Interaction with sigma-70" evidence="1">
    <location>
        <position position="241"/>
    </location>
</feature>
<feature type="site" description="Interaction with sigma-70" evidence="1">
    <location>
        <position position="250"/>
    </location>
</feature>
<keyword id="KW-0010">Activator</keyword>
<keyword id="KW-0963">Cytoplasm</keyword>
<keyword id="KW-0238">DNA-binding</keyword>
<keyword id="KW-0677">Repeat</keyword>
<keyword id="KW-0684">Rhamnose metabolism</keyword>
<keyword id="KW-0804">Transcription</keyword>
<keyword id="KW-0805">Transcription regulation</keyword>
<sequence length="278" mass="32361">MTVLHSVDFFPSCNASVAIEPRLPQADFPEHHHDFHEIVIVEHGTGIHVFNGQPYTITGGTVCFVRDHDRHLYEHTDNLCLTNVLYRSPDRFQFLAGLNQLLPQELDGQYPSHWRVNHSVLQQVRQLVAQMEQQEGENDLPSTASREILFMQLLLLLRKSSLQENLENSASRLNLLLAWLEDHFADEVNWDAVADQFSLSLRTLHRQLKQQTGLTPQRYLNRLRLMKARHLLRHSEASVTDIAYRCGFSDSNHFSTLFRREFNWSPRDIRQGRDGFLQ</sequence>
<organism>
    <name type="scientific">Shigella flexneri serotype 5b (strain 8401)</name>
    <dbReference type="NCBI Taxonomy" id="373384"/>
    <lineage>
        <taxon>Bacteria</taxon>
        <taxon>Pseudomonadati</taxon>
        <taxon>Pseudomonadota</taxon>
        <taxon>Gammaproteobacteria</taxon>
        <taxon>Enterobacterales</taxon>
        <taxon>Enterobacteriaceae</taxon>
        <taxon>Shigella</taxon>
    </lineage>
</organism>
<gene>
    <name evidence="1" type="primary">rhaS</name>
    <name type="ordered locus">SFV_3590</name>
</gene>
<evidence type="ECO:0000255" key="1">
    <source>
        <dbReference type="HAMAP-Rule" id="MF_01534"/>
    </source>
</evidence>
<dbReference type="EMBL" id="CP000266">
    <property type="protein sequence ID" value="ABF05620.1"/>
    <property type="molecule type" value="Genomic_DNA"/>
</dbReference>
<dbReference type="RefSeq" id="WP_000217105.1">
    <property type="nucleotide sequence ID" value="NC_008258.1"/>
</dbReference>
<dbReference type="SMR" id="Q0SZ95"/>
<dbReference type="KEGG" id="sfv:SFV_3590"/>
<dbReference type="HOGENOM" id="CLU_000445_88_5_6"/>
<dbReference type="Proteomes" id="UP000000659">
    <property type="component" value="Chromosome"/>
</dbReference>
<dbReference type="GO" id="GO:0005737">
    <property type="term" value="C:cytoplasm"/>
    <property type="evidence" value="ECO:0007669"/>
    <property type="project" value="UniProtKB-SubCell"/>
</dbReference>
<dbReference type="GO" id="GO:0003700">
    <property type="term" value="F:DNA-binding transcription factor activity"/>
    <property type="evidence" value="ECO:0007669"/>
    <property type="project" value="UniProtKB-UniRule"/>
</dbReference>
<dbReference type="GO" id="GO:0043565">
    <property type="term" value="F:sequence-specific DNA binding"/>
    <property type="evidence" value="ECO:0007669"/>
    <property type="project" value="InterPro"/>
</dbReference>
<dbReference type="GO" id="GO:0045893">
    <property type="term" value="P:positive regulation of DNA-templated transcription"/>
    <property type="evidence" value="ECO:0007669"/>
    <property type="project" value="UniProtKB-UniRule"/>
</dbReference>
<dbReference type="GO" id="GO:0019299">
    <property type="term" value="P:rhamnose metabolic process"/>
    <property type="evidence" value="ECO:0007669"/>
    <property type="project" value="UniProtKB-UniRule"/>
</dbReference>
<dbReference type="CDD" id="cd06977">
    <property type="entry name" value="cupin_RhaR_RhaS-like_N"/>
    <property type="match status" value="1"/>
</dbReference>
<dbReference type="FunFam" id="1.10.10.60:FF:000181">
    <property type="entry name" value="HTH-type transcriptional activator RhaS"/>
    <property type="match status" value="1"/>
</dbReference>
<dbReference type="Gene3D" id="1.10.10.60">
    <property type="entry name" value="Homeodomain-like"/>
    <property type="match status" value="1"/>
</dbReference>
<dbReference type="Gene3D" id="2.60.120.10">
    <property type="entry name" value="Jelly Rolls"/>
    <property type="match status" value="1"/>
</dbReference>
<dbReference type="HAMAP" id="MF_01534">
    <property type="entry name" value="HTH_type_RhaS"/>
    <property type="match status" value="1"/>
</dbReference>
<dbReference type="InterPro" id="IPR003313">
    <property type="entry name" value="AraC-bd"/>
</dbReference>
<dbReference type="InterPro" id="IPR050204">
    <property type="entry name" value="AraC_XylS_family_regulators"/>
</dbReference>
<dbReference type="InterPro" id="IPR009057">
    <property type="entry name" value="Homeodomain-like_sf"/>
</dbReference>
<dbReference type="InterPro" id="IPR037923">
    <property type="entry name" value="HTH-like"/>
</dbReference>
<dbReference type="InterPro" id="IPR018060">
    <property type="entry name" value="HTH_AraC"/>
</dbReference>
<dbReference type="InterPro" id="IPR018062">
    <property type="entry name" value="HTH_AraC-typ_CS"/>
</dbReference>
<dbReference type="InterPro" id="IPR047220">
    <property type="entry name" value="RhaR_RhaS-like_N"/>
</dbReference>
<dbReference type="InterPro" id="IPR014710">
    <property type="entry name" value="RmlC-like_jellyroll"/>
</dbReference>
<dbReference type="InterPro" id="IPR020449">
    <property type="entry name" value="Tscrpt_reg_AraC-type_HTH"/>
</dbReference>
<dbReference type="InterPro" id="IPR023609">
    <property type="entry name" value="Tscrpt_reg_HTH_RhaS"/>
</dbReference>
<dbReference type="NCBIfam" id="NF010028">
    <property type="entry name" value="PRK13503.1"/>
    <property type="match status" value="1"/>
</dbReference>
<dbReference type="PANTHER" id="PTHR46796:SF13">
    <property type="entry name" value="HTH-TYPE TRANSCRIPTIONAL ACTIVATOR RHAS"/>
    <property type="match status" value="1"/>
</dbReference>
<dbReference type="PANTHER" id="PTHR46796">
    <property type="entry name" value="HTH-TYPE TRANSCRIPTIONAL ACTIVATOR RHAS-RELATED"/>
    <property type="match status" value="1"/>
</dbReference>
<dbReference type="Pfam" id="PF02311">
    <property type="entry name" value="AraC_binding"/>
    <property type="match status" value="1"/>
</dbReference>
<dbReference type="Pfam" id="PF12833">
    <property type="entry name" value="HTH_18"/>
    <property type="match status" value="1"/>
</dbReference>
<dbReference type="PRINTS" id="PR00032">
    <property type="entry name" value="HTHARAC"/>
</dbReference>
<dbReference type="SMART" id="SM00342">
    <property type="entry name" value="HTH_ARAC"/>
    <property type="match status" value="1"/>
</dbReference>
<dbReference type="SUPFAM" id="SSF46689">
    <property type="entry name" value="Homeodomain-like"/>
    <property type="match status" value="2"/>
</dbReference>
<dbReference type="SUPFAM" id="SSF51215">
    <property type="entry name" value="Regulatory protein AraC"/>
    <property type="match status" value="1"/>
</dbReference>
<dbReference type="PROSITE" id="PS00041">
    <property type="entry name" value="HTH_ARAC_FAMILY_1"/>
    <property type="match status" value="1"/>
</dbReference>
<dbReference type="PROSITE" id="PS01124">
    <property type="entry name" value="HTH_ARAC_FAMILY_2"/>
    <property type="match status" value="1"/>
</dbReference>